<protein>
    <recommendedName>
        <fullName evidence="1">Aspartate--tRNA ligase</fullName>
        <ecNumber evidence="1">6.1.1.12</ecNumber>
    </recommendedName>
    <alternativeName>
        <fullName evidence="1">Aspartyl-tRNA synthetase</fullName>
        <shortName evidence="1">AspRS</shortName>
    </alternativeName>
</protein>
<organism>
    <name type="scientific">Photobacterium profundum (strain SS9)</name>
    <dbReference type="NCBI Taxonomy" id="298386"/>
    <lineage>
        <taxon>Bacteria</taxon>
        <taxon>Pseudomonadati</taxon>
        <taxon>Pseudomonadota</taxon>
        <taxon>Gammaproteobacteria</taxon>
        <taxon>Vibrionales</taxon>
        <taxon>Vibrionaceae</taxon>
        <taxon>Photobacterium</taxon>
    </lineage>
</organism>
<feature type="chain" id="PRO_0000110918" description="Aspartate--tRNA ligase">
    <location>
        <begin position="1"/>
        <end position="597"/>
    </location>
</feature>
<feature type="region of interest" description="Aspartate" evidence="1">
    <location>
        <begin position="195"/>
        <end position="198"/>
    </location>
</feature>
<feature type="binding site" evidence="1">
    <location>
        <position position="171"/>
    </location>
    <ligand>
        <name>L-aspartate</name>
        <dbReference type="ChEBI" id="CHEBI:29991"/>
    </ligand>
</feature>
<feature type="binding site" evidence="1">
    <location>
        <begin position="217"/>
        <end position="219"/>
    </location>
    <ligand>
        <name>ATP</name>
        <dbReference type="ChEBI" id="CHEBI:30616"/>
    </ligand>
</feature>
<feature type="binding site" evidence="1">
    <location>
        <position position="217"/>
    </location>
    <ligand>
        <name>L-aspartate</name>
        <dbReference type="ChEBI" id="CHEBI:29991"/>
    </ligand>
</feature>
<feature type="binding site" evidence="1">
    <location>
        <position position="226"/>
    </location>
    <ligand>
        <name>ATP</name>
        <dbReference type="ChEBI" id="CHEBI:30616"/>
    </ligand>
</feature>
<feature type="binding site" evidence="1">
    <location>
        <position position="448"/>
    </location>
    <ligand>
        <name>L-aspartate</name>
        <dbReference type="ChEBI" id="CHEBI:29991"/>
    </ligand>
</feature>
<feature type="binding site" evidence="1">
    <location>
        <position position="482"/>
    </location>
    <ligand>
        <name>ATP</name>
        <dbReference type="ChEBI" id="CHEBI:30616"/>
    </ligand>
</feature>
<feature type="binding site" evidence="1">
    <location>
        <position position="489"/>
    </location>
    <ligand>
        <name>L-aspartate</name>
        <dbReference type="ChEBI" id="CHEBI:29991"/>
    </ligand>
</feature>
<feature type="binding site" evidence="1">
    <location>
        <begin position="534"/>
        <end position="537"/>
    </location>
    <ligand>
        <name>ATP</name>
        <dbReference type="ChEBI" id="CHEBI:30616"/>
    </ligand>
</feature>
<sequence>MRTQYCGHLNKSLEGQTVELCGWVNRRRDLGGLIFIDMRDREGIVQVVVDPDMKDVFELANQLRNEFCIRLIGEVRVRPESQVNKKMATGEVEILATGLEIINRSDVLPLDFNQNNSEEQRLKFRYLDLRRPEMSDRIKLRAKASSFVRRFLDENAFLDIETPVLTKATPEGARDYLVPSRVHKGSFYALPQSPQLFKQLLMMSGFDRYYQIVKCFRDEDLRADRQPEFTQIDIETSFMSAEQVREITEKMITEMWKELLNVDLGTFPIMQFEEALRRFGSDKPDLRNPLELVDVADILKDVDFKVFSGPANDEKGRVAVIRVPGGASLSRKQIDEYTKFVGIYGAKGLAWMKVNDREAGFAGVQSPVAKFLNEDVVANLLDRTQAETGDIILFGADSKRVVTEALGALRLKLGEDLELTDKSIWKPLWVIDFPMFEEDGEGNLHAMHHPFTSPLGITAEELAVNPAAANSNAYDMVINGYEVGGGSVRIHNADMQSAVFNILGIEEGEQQSKFGFLLEALKYGTPPHAGLAFGLDRLVMLLCGTDNIRDVIAFPKTTAASCLLTNAPSLANPDSLKELSIAVAIAKKETAKEESAE</sequence>
<gene>
    <name evidence="1" type="primary">aspS</name>
    <name type="ordered locus">PBPRA1112</name>
</gene>
<proteinExistence type="inferred from homology"/>
<accession>Q6LT53</accession>
<name>SYD_PHOPR</name>
<comment type="function">
    <text evidence="1">Catalyzes the attachment of L-aspartate to tRNA(Asp) in a two-step reaction: L-aspartate is first activated by ATP to form Asp-AMP and then transferred to the acceptor end of tRNA(Asp).</text>
</comment>
<comment type="catalytic activity">
    <reaction evidence="1">
        <text>tRNA(Asp) + L-aspartate + ATP = L-aspartyl-tRNA(Asp) + AMP + diphosphate</text>
        <dbReference type="Rhea" id="RHEA:19649"/>
        <dbReference type="Rhea" id="RHEA-COMP:9660"/>
        <dbReference type="Rhea" id="RHEA-COMP:9678"/>
        <dbReference type="ChEBI" id="CHEBI:29991"/>
        <dbReference type="ChEBI" id="CHEBI:30616"/>
        <dbReference type="ChEBI" id="CHEBI:33019"/>
        <dbReference type="ChEBI" id="CHEBI:78442"/>
        <dbReference type="ChEBI" id="CHEBI:78516"/>
        <dbReference type="ChEBI" id="CHEBI:456215"/>
        <dbReference type="EC" id="6.1.1.12"/>
    </reaction>
</comment>
<comment type="subunit">
    <text evidence="1">Homodimer.</text>
</comment>
<comment type="subcellular location">
    <subcellularLocation>
        <location evidence="1">Cytoplasm</location>
    </subcellularLocation>
</comment>
<comment type="similarity">
    <text evidence="1">Belongs to the class-II aminoacyl-tRNA synthetase family. Type 1 subfamily.</text>
</comment>
<keyword id="KW-0030">Aminoacyl-tRNA synthetase</keyword>
<keyword id="KW-0067">ATP-binding</keyword>
<keyword id="KW-0963">Cytoplasm</keyword>
<keyword id="KW-0436">Ligase</keyword>
<keyword id="KW-0547">Nucleotide-binding</keyword>
<keyword id="KW-0648">Protein biosynthesis</keyword>
<keyword id="KW-1185">Reference proteome</keyword>
<reference key="1">
    <citation type="journal article" date="2005" name="Science">
        <title>Life at depth: Photobacterium profundum genome sequence and expression analysis.</title>
        <authorList>
            <person name="Vezzi A."/>
            <person name="Campanaro S."/>
            <person name="D'Angelo M."/>
            <person name="Simonato F."/>
            <person name="Vitulo N."/>
            <person name="Lauro F.M."/>
            <person name="Cestaro A."/>
            <person name="Malacrida G."/>
            <person name="Simionati B."/>
            <person name="Cannata N."/>
            <person name="Romualdi C."/>
            <person name="Bartlett D.H."/>
            <person name="Valle G."/>
        </authorList>
    </citation>
    <scope>NUCLEOTIDE SEQUENCE [LARGE SCALE GENOMIC DNA]</scope>
    <source>
        <strain>ATCC BAA-1253 / SS9</strain>
    </source>
</reference>
<evidence type="ECO:0000255" key="1">
    <source>
        <dbReference type="HAMAP-Rule" id="MF_00044"/>
    </source>
</evidence>
<dbReference type="EC" id="6.1.1.12" evidence="1"/>
<dbReference type="EMBL" id="CR378666">
    <property type="protein sequence ID" value="CAG19523.1"/>
    <property type="molecule type" value="Genomic_DNA"/>
</dbReference>
<dbReference type="RefSeq" id="WP_011217856.1">
    <property type="nucleotide sequence ID" value="NC_006370.1"/>
</dbReference>
<dbReference type="SMR" id="Q6LT53"/>
<dbReference type="STRING" id="298386.PBPRA1112"/>
<dbReference type="KEGG" id="ppr:PBPRA1112"/>
<dbReference type="eggNOG" id="COG0173">
    <property type="taxonomic scope" value="Bacteria"/>
</dbReference>
<dbReference type="HOGENOM" id="CLU_014330_3_2_6"/>
<dbReference type="Proteomes" id="UP000000593">
    <property type="component" value="Chromosome 1"/>
</dbReference>
<dbReference type="GO" id="GO:0005737">
    <property type="term" value="C:cytoplasm"/>
    <property type="evidence" value="ECO:0007669"/>
    <property type="project" value="UniProtKB-SubCell"/>
</dbReference>
<dbReference type="GO" id="GO:0004815">
    <property type="term" value="F:aspartate-tRNA ligase activity"/>
    <property type="evidence" value="ECO:0007669"/>
    <property type="project" value="UniProtKB-UniRule"/>
</dbReference>
<dbReference type="GO" id="GO:0005524">
    <property type="term" value="F:ATP binding"/>
    <property type="evidence" value="ECO:0007669"/>
    <property type="project" value="UniProtKB-UniRule"/>
</dbReference>
<dbReference type="GO" id="GO:0003676">
    <property type="term" value="F:nucleic acid binding"/>
    <property type="evidence" value="ECO:0007669"/>
    <property type="project" value="InterPro"/>
</dbReference>
<dbReference type="GO" id="GO:0006422">
    <property type="term" value="P:aspartyl-tRNA aminoacylation"/>
    <property type="evidence" value="ECO:0007669"/>
    <property type="project" value="UniProtKB-UniRule"/>
</dbReference>
<dbReference type="CDD" id="cd00777">
    <property type="entry name" value="AspRS_core"/>
    <property type="match status" value="1"/>
</dbReference>
<dbReference type="CDD" id="cd04317">
    <property type="entry name" value="EcAspRS_like_N"/>
    <property type="match status" value="1"/>
</dbReference>
<dbReference type="FunFam" id="2.40.50.140:FF:000080">
    <property type="entry name" value="Aspartate--tRNA ligase"/>
    <property type="match status" value="1"/>
</dbReference>
<dbReference type="Gene3D" id="3.30.930.10">
    <property type="entry name" value="Bira Bifunctional Protein, Domain 2"/>
    <property type="match status" value="1"/>
</dbReference>
<dbReference type="Gene3D" id="3.30.1360.30">
    <property type="entry name" value="GAD-like domain"/>
    <property type="match status" value="1"/>
</dbReference>
<dbReference type="Gene3D" id="2.40.50.140">
    <property type="entry name" value="Nucleic acid-binding proteins"/>
    <property type="match status" value="1"/>
</dbReference>
<dbReference type="HAMAP" id="MF_00044">
    <property type="entry name" value="Asp_tRNA_synth_type1"/>
    <property type="match status" value="1"/>
</dbReference>
<dbReference type="InterPro" id="IPR004364">
    <property type="entry name" value="Aa-tRNA-synt_II"/>
</dbReference>
<dbReference type="InterPro" id="IPR006195">
    <property type="entry name" value="aa-tRNA-synth_II"/>
</dbReference>
<dbReference type="InterPro" id="IPR045864">
    <property type="entry name" value="aa-tRNA-synth_II/BPL/LPL"/>
</dbReference>
<dbReference type="InterPro" id="IPR004524">
    <property type="entry name" value="Asp-tRNA-ligase_1"/>
</dbReference>
<dbReference type="InterPro" id="IPR047089">
    <property type="entry name" value="Asp-tRNA-ligase_1_N"/>
</dbReference>
<dbReference type="InterPro" id="IPR002312">
    <property type="entry name" value="Asp/Asn-tRNA-synth_IIb"/>
</dbReference>
<dbReference type="InterPro" id="IPR047090">
    <property type="entry name" value="AspRS_core"/>
</dbReference>
<dbReference type="InterPro" id="IPR004115">
    <property type="entry name" value="GAD-like_sf"/>
</dbReference>
<dbReference type="InterPro" id="IPR029351">
    <property type="entry name" value="GAD_dom"/>
</dbReference>
<dbReference type="InterPro" id="IPR012340">
    <property type="entry name" value="NA-bd_OB-fold"/>
</dbReference>
<dbReference type="InterPro" id="IPR004365">
    <property type="entry name" value="NA-bd_OB_tRNA"/>
</dbReference>
<dbReference type="NCBIfam" id="TIGR00459">
    <property type="entry name" value="aspS_bact"/>
    <property type="match status" value="1"/>
</dbReference>
<dbReference type="NCBIfam" id="NF001750">
    <property type="entry name" value="PRK00476.1"/>
    <property type="match status" value="1"/>
</dbReference>
<dbReference type="PANTHER" id="PTHR22594:SF5">
    <property type="entry name" value="ASPARTATE--TRNA LIGASE, MITOCHONDRIAL"/>
    <property type="match status" value="1"/>
</dbReference>
<dbReference type="PANTHER" id="PTHR22594">
    <property type="entry name" value="ASPARTYL/LYSYL-TRNA SYNTHETASE"/>
    <property type="match status" value="1"/>
</dbReference>
<dbReference type="Pfam" id="PF02938">
    <property type="entry name" value="GAD"/>
    <property type="match status" value="1"/>
</dbReference>
<dbReference type="Pfam" id="PF00152">
    <property type="entry name" value="tRNA-synt_2"/>
    <property type="match status" value="1"/>
</dbReference>
<dbReference type="Pfam" id="PF01336">
    <property type="entry name" value="tRNA_anti-codon"/>
    <property type="match status" value="1"/>
</dbReference>
<dbReference type="PRINTS" id="PR01042">
    <property type="entry name" value="TRNASYNTHASP"/>
</dbReference>
<dbReference type="SUPFAM" id="SSF55681">
    <property type="entry name" value="Class II aaRS and biotin synthetases"/>
    <property type="match status" value="1"/>
</dbReference>
<dbReference type="SUPFAM" id="SSF55261">
    <property type="entry name" value="GAD domain-like"/>
    <property type="match status" value="1"/>
</dbReference>
<dbReference type="SUPFAM" id="SSF50249">
    <property type="entry name" value="Nucleic acid-binding proteins"/>
    <property type="match status" value="1"/>
</dbReference>
<dbReference type="PROSITE" id="PS50862">
    <property type="entry name" value="AA_TRNA_LIGASE_II"/>
    <property type="match status" value="1"/>
</dbReference>